<proteinExistence type="inferred from homology"/>
<dbReference type="EMBL" id="CP001056">
    <property type="protein sequence ID" value="ACD22307.1"/>
    <property type="molecule type" value="Genomic_DNA"/>
</dbReference>
<dbReference type="SMR" id="B2TIB8"/>
<dbReference type="KEGG" id="cbk:CLL_A1818"/>
<dbReference type="PATRIC" id="fig|935198.13.peg.1764"/>
<dbReference type="HOGENOM" id="CLU_004131_4_1_9"/>
<dbReference type="Proteomes" id="UP000001195">
    <property type="component" value="Chromosome"/>
</dbReference>
<dbReference type="GO" id="GO:0032300">
    <property type="term" value="C:mismatch repair complex"/>
    <property type="evidence" value="ECO:0007669"/>
    <property type="project" value="InterPro"/>
</dbReference>
<dbReference type="GO" id="GO:0005524">
    <property type="term" value="F:ATP binding"/>
    <property type="evidence" value="ECO:0007669"/>
    <property type="project" value="InterPro"/>
</dbReference>
<dbReference type="GO" id="GO:0016887">
    <property type="term" value="F:ATP hydrolysis activity"/>
    <property type="evidence" value="ECO:0007669"/>
    <property type="project" value="InterPro"/>
</dbReference>
<dbReference type="GO" id="GO:0140664">
    <property type="term" value="F:ATP-dependent DNA damage sensor activity"/>
    <property type="evidence" value="ECO:0007669"/>
    <property type="project" value="InterPro"/>
</dbReference>
<dbReference type="GO" id="GO:0030983">
    <property type="term" value="F:mismatched DNA binding"/>
    <property type="evidence" value="ECO:0007669"/>
    <property type="project" value="InterPro"/>
</dbReference>
<dbReference type="GO" id="GO:0006298">
    <property type="term" value="P:mismatch repair"/>
    <property type="evidence" value="ECO:0007669"/>
    <property type="project" value="UniProtKB-UniRule"/>
</dbReference>
<dbReference type="CDD" id="cd16926">
    <property type="entry name" value="HATPase_MutL-MLH-PMS-like"/>
    <property type="match status" value="1"/>
</dbReference>
<dbReference type="CDD" id="cd00782">
    <property type="entry name" value="MutL_Trans"/>
    <property type="match status" value="1"/>
</dbReference>
<dbReference type="FunFam" id="3.30.565.10:FF:000003">
    <property type="entry name" value="DNA mismatch repair endonuclease MutL"/>
    <property type="match status" value="1"/>
</dbReference>
<dbReference type="Gene3D" id="3.30.230.10">
    <property type="match status" value="1"/>
</dbReference>
<dbReference type="Gene3D" id="3.30.565.10">
    <property type="entry name" value="Histidine kinase-like ATPase, C-terminal domain"/>
    <property type="match status" value="1"/>
</dbReference>
<dbReference type="Gene3D" id="3.30.1540.20">
    <property type="entry name" value="MutL, C-terminal domain, dimerisation subdomain"/>
    <property type="match status" value="1"/>
</dbReference>
<dbReference type="Gene3D" id="3.30.1370.100">
    <property type="entry name" value="MutL, C-terminal domain, regulatory subdomain"/>
    <property type="match status" value="1"/>
</dbReference>
<dbReference type="HAMAP" id="MF_00149">
    <property type="entry name" value="DNA_mis_repair"/>
    <property type="match status" value="1"/>
</dbReference>
<dbReference type="InterPro" id="IPR014762">
    <property type="entry name" value="DNA_mismatch_repair_CS"/>
</dbReference>
<dbReference type="InterPro" id="IPR020667">
    <property type="entry name" value="DNA_mismatch_repair_MutL"/>
</dbReference>
<dbReference type="InterPro" id="IPR013507">
    <property type="entry name" value="DNA_mismatch_S5_2-like"/>
</dbReference>
<dbReference type="InterPro" id="IPR036890">
    <property type="entry name" value="HATPase_C_sf"/>
</dbReference>
<dbReference type="InterPro" id="IPR002099">
    <property type="entry name" value="MutL/Mlh/PMS"/>
</dbReference>
<dbReference type="InterPro" id="IPR038973">
    <property type="entry name" value="MutL/Mlh/Pms-like"/>
</dbReference>
<dbReference type="InterPro" id="IPR014790">
    <property type="entry name" value="MutL_C"/>
</dbReference>
<dbReference type="InterPro" id="IPR042120">
    <property type="entry name" value="MutL_C_dimsub"/>
</dbReference>
<dbReference type="InterPro" id="IPR042121">
    <property type="entry name" value="MutL_C_regsub"/>
</dbReference>
<dbReference type="InterPro" id="IPR037198">
    <property type="entry name" value="MutL_C_sf"/>
</dbReference>
<dbReference type="InterPro" id="IPR020568">
    <property type="entry name" value="Ribosomal_Su5_D2-typ_SF"/>
</dbReference>
<dbReference type="InterPro" id="IPR014721">
    <property type="entry name" value="Ribsml_uS5_D2-typ_fold_subgr"/>
</dbReference>
<dbReference type="NCBIfam" id="TIGR00585">
    <property type="entry name" value="mutl"/>
    <property type="match status" value="1"/>
</dbReference>
<dbReference type="PANTHER" id="PTHR10073">
    <property type="entry name" value="DNA MISMATCH REPAIR PROTEIN MLH, PMS, MUTL"/>
    <property type="match status" value="1"/>
</dbReference>
<dbReference type="PANTHER" id="PTHR10073:SF12">
    <property type="entry name" value="DNA MISMATCH REPAIR PROTEIN MLH1"/>
    <property type="match status" value="1"/>
</dbReference>
<dbReference type="Pfam" id="PF01119">
    <property type="entry name" value="DNA_mis_repair"/>
    <property type="match status" value="1"/>
</dbReference>
<dbReference type="Pfam" id="PF13589">
    <property type="entry name" value="HATPase_c_3"/>
    <property type="match status" value="1"/>
</dbReference>
<dbReference type="Pfam" id="PF08676">
    <property type="entry name" value="MutL_C"/>
    <property type="match status" value="1"/>
</dbReference>
<dbReference type="SMART" id="SM01340">
    <property type="entry name" value="DNA_mis_repair"/>
    <property type="match status" value="1"/>
</dbReference>
<dbReference type="SMART" id="SM00853">
    <property type="entry name" value="MutL_C"/>
    <property type="match status" value="1"/>
</dbReference>
<dbReference type="SUPFAM" id="SSF55874">
    <property type="entry name" value="ATPase domain of HSP90 chaperone/DNA topoisomerase II/histidine kinase"/>
    <property type="match status" value="1"/>
</dbReference>
<dbReference type="SUPFAM" id="SSF118116">
    <property type="entry name" value="DNA mismatch repair protein MutL"/>
    <property type="match status" value="1"/>
</dbReference>
<dbReference type="SUPFAM" id="SSF54211">
    <property type="entry name" value="Ribosomal protein S5 domain 2-like"/>
    <property type="match status" value="1"/>
</dbReference>
<dbReference type="PROSITE" id="PS00058">
    <property type="entry name" value="DNA_MISMATCH_REPAIR_1"/>
    <property type="match status" value="1"/>
</dbReference>
<protein>
    <recommendedName>
        <fullName evidence="1">DNA mismatch repair protein MutL</fullName>
    </recommendedName>
</protein>
<sequence length="672" mass="76091">MKRINILNEDTANKIAAGEVVERPASVVKELVENAIDANSKNILIEIEEGGSSLIRIIDDGDGIYKEDIEKAFLPHATSKIKESEDIYSINTLGFRGEALPSIASVARVNLKTKQETEECGYEITIEGGKFSEVTECGVNKGTIMEVRDLFFNVPARKKFLKTTSKESSLINDIITRIALSNPNISFKLFNNGKKIIHTYGNGNMKDVIRTIYGKSIVENVLYFEDTSDIATIYGYVGKEAIARGSRNNQSIFVNSRYIKNRSLGIAVEQAFKSFSTVSKFPFFILFIEIYPEYIDVNIHPTKSEVKFNDERFIFKKIFGAVHTSLKEEVFSTFSIPEEVNEAISKNTNLNIEEITFKIEEEQEKVKFNTNHLSQKNICSTQGNNSINKHIYDEKHKTDTNIPLNVNIPVDLKSDHIKLEDDNNSIPNKEVICDNNEVKYESSYTSDSNQYENSCKSDVDKESKSKTTGTSELVKEKIPKFPAIKIIGQYNKTYILGEYAGTLYMIDQHAAHEKIMFEKYLNDIICGDIIIQPLMIPTVIDLSMDDYSYFEENKDVFKEAGFTIEDFGGTSIALKEVPYFLGKLKPKNLFLEILDNLKNLGSGKTTEVKYNAIATKACKSAVKGNDSLDELEMVKLIEELRYIDDPFHCPHGRPTIIQFTSTDIDKKFRRIV</sequence>
<name>MUTL_CLOBB</name>
<feature type="chain" id="PRO_1000096642" description="DNA mismatch repair protein MutL">
    <location>
        <begin position="1"/>
        <end position="672"/>
    </location>
</feature>
<feature type="region of interest" description="Disordered" evidence="2">
    <location>
        <begin position="443"/>
        <end position="469"/>
    </location>
</feature>
<feature type="compositionally biased region" description="Polar residues" evidence="2">
    <location>
        <begin position="443"/>
        <end position="454"/>
    </location>
</feature>
<feature type="compositionally biased region" description="Basic and acidic residues" evidence="2">
    <location>
        <begin position="455"/>
        <end position="465"/>
    </location>
</feature>
<gene>
    <name evidence="1" type="primary">mutL</name>
    <name type="ordered locus">CLL_A1818</name>
</gene>
<reference key="1">
    <citation type="submission" date="2008-04" db="EMBL/GenBank/DDBJ databases">
        <title>Complete sequence of Clostridium botulinum strain Eklund.</title>
        <authorList>
            <person name="Brinkac L.M."/>
            <person name="Brown J.L."/>
            <person name="Bruce D."/>
            <person name="Detter C."/>
            <person name="Munk C."/>
            <person name="Smith L.A."/>
            <person name="Smith T.J."/>
            <person name="Sutton G."/>
            <person name="Brettin T.S."/>
        </authorList>
    </citation>
    <scope>NUCLEOTIDE SEQUENCE [LARGE SCALE GENOMIC DNA]</scope>
    <source>
        <strain>Eklund 17B / Type B</strain>
    </source>
</reference>
<comment type="function">
    <text evidence="1">This protein is involved in the repair of mismatches in DNA. It is required for dam-dependent methyl-directed DNA mismatch repair. May act as a 'molecular matchmaker', a protein that promotes the formation of a stable complex between two or more DNA-binding proteins in an ATP-dependent manner without itself being part of a final effector complex.</text>
</comment>
<comment type="similarity">
    <text evidence="1">Belongs to the DNA mismatch repair MutL/HexB family.</text>
</comment>
<accession>B2TIB8</accession>
<keyword id="KW-0227">DNA damage</keyword>
<keyword id="KW-0234">DNA repair</keyword>
<evidence type="ECO:0000255" key="1">
    <source>
        <dbReference type="HAMAP-Rule" id="MF_00149"/>
    </source>
</evidence>
<evidence type="ECO:0000256" key="2">
    <source>
        <dbReference type="SAM" id="MobiDB-lite"/>
    </source>
</evidence>
<organism>
    <name type="scientific">Clostridium botulinum (strain Eklund 17B / Type B)</name>
    <dbReference type="NCBI Taxonomy" id="935198"/>
    <lineage>
        <taxon>Bacteria</taxon>
        <taxon>Bacillati</taxon>
        <taxon>Bacillota</taxon>
        <taxon>Clostridia</taxon>
        <taxon>Eubacteriales</taxon>
        <taxon>Clostridiaceae</taxon>
        <taxon>Clostridium</taxon>
    </lineage>
</organism>